<dbReference type="EC" id="6.1.1.17" evidence="1"/>
<dbReference type="EMBL" id="CP000745">
    <property type="protein sequence ID" value="ABR65323.1"/>
    <property type="molecule type" value="Genomic_DNA"/>
</dbReference>
<dbReference type="SMR" id="A6VFU7"/>
<dbReference type="STRING" id="426368.MmarC7_0253"/>
<dbReference type="KEGG" id="mmz:MmarC7_0253"/>
<dbReference type="eggNOG" id="arCOG04302">
    <property type="taxonomic scope" value="Archaea"/>
</dbReference>
<dbReference type="HOGENOM" id="CLU_001882_1_3_2"/>
<dbReference type="OrthoDB" id="10470at2157"/>
<dbReference type="GO" id="GO:0005829">
    <property type="term" value="C:cytosol"/>
    <property type="evidence" value="ECO:0007669"/>
    <property type="project" value="TreeGrafter"/>
</dbReference>
<dbReference type="GO" id="GO:0032991">
    <property type="term" value="C:protein-containing complex"/>
    <property type="evidence" value="ECO:0007669"/>
    <property type="project" value="UniProtKB-ARBA"/>
</dbReference>
<dbReference type="GO" id="GO:0005524">
    <property type="term" value="F:ATP binding"/>
    <property type="evidence" value="ECO:0007669"/>
    <property type="project" value="UniProtKB-UniRule"/>
</dbReference>
<dbReference type="GO" id="GO:0004818">
    <property type="term" value="F:glutamate-tRNA ligase activity"/>
    <property type="evidence" value="ECO:0007669"/>
    <property type="project" value="UniProtKB-UniRule"/>
</dbReference>
<dbReference type="GO" id="GO:0043604">
    <property type="term" value="P:amide biosynthetic process"/>
    <property type="evidence" value="ECO:0007669"/>
    <property type="project" value="TreeGrafter"/>
</dbReference>
<dbReference type="GO" id="GO:0006424">
    <property type="term" value="P:glutamyl-tRNA aminoacylation"/>
    <property type="evidence" value="ECO:0007669"/>
    <property type="project" value="UniProtKB-UniRule"/>
</dbReference>
<dbReference type="CDD" id="cd09287">
    <property type="entry name" value="GluRS_non_core"/>
    <property type="match status" value="1"/>
</dbReference>
<dbReference type="Gene3D" id="2.40.240.100">
    <property type="match status" value="1"/>
</dbReference>
<dbReference type="Gene3D" id="3.40.50.620">
    <property type="entry name" value="HUPs"/>
    <property type="match status" value="1"/>
</dbReference>
<dbReference type="Gene3D" id="2.40.240.10">
    <property type="entry name" value="Ribosomal Protein L25, Chain P"/>
    <property type="match status" value="1"/>
</dbReference>
<dbReference type="HAMAP" id="MF_02076">
    <property type="entry name" value="Glu_tRNA_synth_type2"/>
    <property type="match status" value="1"/>
</dbReference>
<dbReference type="InterPro" id="IPR001412">
    <property type="entry name" value="aa-tRNA-synth_I_CS"/>
</dbReference>
<dbReference type="InterPro" id="IPR050132">
    <property type="entry name" value="Gln/Glu-tRNA_Ligase"/>
</dbReference>
<dbReference type="InterPro" id="IPR004526">
    <property type="entry name" value="Glu-tRNA-synth_arc/euk"/>
</dbReference>
<dbReference type="InterPro" id="IPR000924">
    <property type="entry name" value="Glu/Gln-tRNA-synth"/>
</dbReference>
<dbReference type="InterPro" id="IPR020058">
    <property type="entry name" value="Glu/Gln-tRNA-synth_Ib_cat-dom"/>
</dbReference>
<dbReference type="InterPro" id="IPR020059">
    <property type="entry name" value="Glu/Gln-tRNA-synth_Ib_codon-bd"/>
</dbReference>
<dbReference type="InterPro" id="IPR020056">
    <property type="entry name" value="Rbsml_bL25/Gln-tRNA_synth_N"/>
</dbReference>
<dbReference type="InterPro" id="IPR011035">
    <property type="entry name" value="Ribosomal_bL25/Gln-tRNA_synth"/>
</dbReference>
<dbReference type="InterPro" id="IPR014729">
    <property type="entry name" value="Rossmann-like_a/b/a_fold"/>
</dbReference>
<dbReference type="InterPro" id="IPR049437">
    <property type="entry name" value="tRNA-synt_1c_C2"/>
</dbReference>
<dbReference type="NCBIfam" id="TIGR00463">
    <property type="entry name" value="gltX_arch"/>
    <property type="match status" value="1"/>
</dbReference>
<dbReference type="NCBIfam" id="NF003169">
    <property type="entry name" value="PRK04156.1"/>
    <property type="match status" value="1"/>
</dbReference>
<dbReference type="PANTHER" id="PTHR43097:SF5">
    <property type="entry name" value="GLUTAMATE--TRNA LIGASE"/>
    <property type="match status" value="1"/>
</dbReference>
<dbReference type="PANTHER" id="PTHR43097">
    <property type="entry name" value="GLUTAMINE-TRNA LIGASE"/>
    <property type="match status" value="1"/>
</dbReference>
<dbReference type="Pfam" id="PF00749">
    <property type="entry name" value="tRNA-synt_1c"/>
    <property type="match status" value="1"/>
</dbReference>
<dbReference type="Pfam" id="PF03950">
    <property type="entry name" value="tRNA-synt_1c_C"/>
    <property type="match status" value="1"/>
</dbReference>
<dbReference type="Pfam" id="PF20974">
    <property type="entry name" value="tRNA-synt_1c_C2"/>
    <property type="match status" value="1"/>
</dbReference>
<dbReference type="PRINTS" id="PR00987">
    <property type="entry name" value="TRNASYNTHGLU"/>
</dbReference>
<dbReference type="SUPFAM" id="SSF52374">
    <property type="entry name" value="Nucleotidylyl transferase"/>
    <property type="match status" value="1"/>
</dbReference>
<dbReference type="SUPFAM" id="SSF50715">
    <property type="entry name" value="Ribosomal protein L25-like"/>
    <property type="match status" value="1"/>
</dbReference>
<dbReference type="PROSITE" id="PS00178">
    <property type="entry name" value="AA_TRNA_LIGASE_I"/>
    <property type="match status" value="1"/>
</dbReference>
<gene>
    <name evidence="1" type="primary">gltX</name>
    <name type="ordered locus">MmarC7_0253</name>
</gene>
<sequence>MKDTVMAYLLENSIKFKGKPNPKAAMGKILGENPDLRSNVKELNEVISEVVKEIESMSLEEQQAKLDELAPEGLGQKTERKRKEIELKNVKGNVVMRFAPNPSGPLHIGHARASVLNDFFTKKYNGKLVLRLEDTDAKRVLPEAYEMIQEDLKWLGVKVDEVIVQSERLEIYYEYGRKLIEMGHAYVCDCDAEEFRNLREQGIPCKCRDTTPEENIALWEKMLAGELENVAVRLKTDIVHKNPSIRDFPIFRIERTPHPKNGTKYHVYPLMNLSVTVDDHLLGMTHVLRGKDHIVNTEKQEYIYNYFGWEIPEYVHYGILKIEGPVLSTSKMHAGILSGEYSGWDDARLGTLRALRKRGIRPEALYKLMVEIGIKQADVRFAWENLYAANKDIIDKDARRFFFVESPKKLVISGAESKKIDLRMHPDRNELGNRELLFDGEIYVSDDLEVGTMYRLMELFNIVIEKIENDVIYAKYDSDDLAVAKSNKASIIHWIPVKDSIPVTVIDENAEKIEGFAEKDFAVVNEDDFVQFERFGFVRVDEKEDNGYTCYLTHK</sequence>
<comment type="function">
    <text evidence="1">Catalyzes the attachment of glutamate to tRNA(Glu) in a two-step reaction: glutamate is first activated by ATP to form Glu-AMP and then transferred to the acceptor end of tRNA(Glu).</text>
</comment>
<comment type="catalytic activity">
    <reaction evidence="1">
        <text>tRNA(Glu) + L-glutamate + ATP = L-glutamyl-tRNA(Glu) + AMP + diphosphate</text>
        <dbReference type="Rhea" id="RHEA:23540"/>
        <dbReference type="Rhea" id="RHEA-COMP:9663"/>
        <dbReference type="Rhea" id="RHEA-COMP:9680"/>
        <dbReference type="ChEBI" id="CHEBI:29985"/>
        <dbReference type="ChEBI" id="CHEBI:30616"/>
        <dbReference type="ChEBI" id="CHEBI:33019"/>
        <dbReference type="ChEBI" id="CHEBI:78442"/>
        <dbReference type="ChEBI" id="CHEBI:78520"/>
        <dbReference type="ChEBI" id="CHEBI:456215"/>
        <dbReference type="EC" id="6.1.1.17"/>
    </reaction>
</comment>
<comment type="subcellular location">
    <subcellularLocation>
        <location evidence="1">Cytoplasm</location>
    </subcellularLocation>
</comment>
<comment type="similarity">
    <text evidence="1">Belongs to the class-I aminoacyl-tRNA synthetase family. Glutamate--tRNA ligase type 2 subfamily.</text>
</comment>
<protein>
    <recommendedName>
        <fullName evidence="1">Glutamate--tRNA ligase</fullName>
        <ecNumber evidence="1">6.1.1.17</ecNumber>
    </recommendedName>
    <alternativeName>
        <fullName evidence="1">Glutamyl-tRNA synthetase</fullName>
        <shortName evidence="1">GluRS</shortName>
    </alternativeName>
</protein>
<evidence type="ECO:0000255" key="1">
    <source>
        <dbReference type="HAMAP-Rule" id="MF_02076"/>
    </source>
</evidence>
<proteinExistence type="inferred from homology"/>
<keyword id="KW-0030">Aminoacyl-tRNA synthetase</keyword>
<keyword id="KW-0067">ATP-binding</keyword>
<keyword id="KW-0963">Cytoplasm</keyword>
<keyword id="KW-0436">Ligase</keyword>
<keyword id="KW-0547">Nucleotide-binding</keyword>
<keyword id="KW-0648">Protein biosynthesis</keyword>
<organism>
    <name type="scientific">Methanococcus maripaludis (strain C7 / ATCC BAA-1331)</name>
    <dbReference type="NCBI Taxonomy" id="426368"/>
    <lineage>
        <taxon>Archaea</taxon>
        <taxon>Methanobacteriati</taxon>
        <taxon>Methanobacteriota</taxon>
        <taxon>Methanomada group</taxon>
        <taxon>Methanococci</taxon>
        <taxon>Methanococcales</taxon>
        <taxon>Methanococcaceae</taxon>
        <taxon>Methanococcus</taxon>
    </lineage>
</organism>
<reference key="1">
    <citation type="submission" date="2007-06" db="EMBL/GenBank/DDBJ databases">
        <title>Complete sequence of Methanococcus maripaludis C7.</title>
        <authorList>
            <consortium name="US DOE Joint Genome Institute"/>
            <person name="Copeland A."/>
            <person name="Lucas S."/>
            <person name="Lapidus A."/>
            <person name="Barry K."/>
            <person name="Glavina del Rio T."/>
            <person name="Dalin E."/>
            <person name="Tice H."/>
            <person name="Pitluck S."/>
            <person name="Clum A."/>
            <person name="Schmutz J."/>
            <person name="Larimer F."/>
            <person name="Land M."/>
            <person name="Hauser L."/>
            <person name="Kyrpides N."/>
            <person name="Anderson I."/>
            <person name="Sieprawska-Lupa M."/>
            <person name="Whitman W.B."/>
            <person name="Richardson P."/>
        </authorList>
    </citation>
    <scope>NUCLEOTIDE SEQUENCE [LARGE SCALE GENOMIC DNA]</scope>
    <source>
        <strain>C7 / ATCC BAA-1331</strain>
    </source>
</reference>
<feature type="chain" id="PRO_0000331006" description="Glutamate--tRNA ligase">
    <location>
        <begin position="1"/>
        <end position="555"/>
    </location>
</feature>
<feature type="short sequence motif" description="'HIGH' region" evidence="1">
    <location>
        <begin position="100"/>
        <end position="110"/>
    </location>
</feature>
<name>SYE_METM7</name>
<accession>A6VFU7</accession>